<feature type="chain" id="PRO_0000100680" description="Sulfate adenylyltransferase subunit 2">
    <location>
        <begin position="1"/>
        <end position="302"/>
    </location>
</feature>
<feature type="region of interest" description="Disordered" evidence="2">
    <location>
        <begin position="280"/>
        <end position="302"/>
    </location>
</feature>
<reference key="1">
    <citation type="journal article" date="2003" name="Genome Res.">
        <title>Comparative genome analysis of Vibrio vulnificus, a marine pathogen.</title>
        <authorList>
            <person name="Chen C.-Y."/>
            <person name="Wu K.-M."/>
            <person name="Chang Y.-C."/>
            <person name="Chang C.-H."/>
            <person name="Tsai H.-C."/>
            <person name="Liao T.-L."/>
            <person name="Liu Y.-M."/>
            <person name="Chen H.-J."/>
            <person name="Shen A.B.-T."/>
            <person name="Li J.-C."/>
            <person name="Su T.-L."/>
            <person name="Shao C.-P."/>
            <person name="Lee C.-T."/>
            <person name="Hor L.-I."/>
            <person name="Tsai S.-F."/>
        </authorList>
    </citation>
    <scope>NUCLEOTIDE SEQUENCE [LARGE SCALE GENOMIC DNA]</scope>
    <source>
        <strain>YJ016</strain>
    </source>
</reference>
<comment type="function">
    <text evidence="1">With CysN forms the ATP sulfurylase (ATPS) that catalyzes the adenylation of sulfate producing adenosine 5'-phosphosulfate (APS) and diphosphate, the first enzymatic step in sulfur assimilation pathway. APS synthesis involves the formation of a high-energy phosphoric-sulfuric acid anhydride bond driven by GTP hydrolysis by CysN coupled to ATP hydrolysis by CysD.</text>
</comment>
<comment type="catalytic activity">
    <reaction evidence="1">
        <text>sulfate + ATP + H(+) = adenosine 5'-phosphosulfate + diphosphate</text>
        <dbReference type="Rhea" id="RHEA:18133"/>
        <dbReference type="ChEBI" id="CHEBI:15378"/>
        <dbReference type="ChEBI" id="CHEBI:16189"/>
        <dbReference type="ChEBI" id="CHEBI:30616"/>
        <dbReference type="ChEBI" id="CHEBI:33019"/>
        <dbReference type="ChEBI" id="CHEBI:58243"/>
        <dbReference type="EC" id="2.7.7.4"/>
    </reaction>
</comment>
<comment type="pathway">
    <text evidence="1">Sulfur metabolism; hydrogen sulfide biosynthesis; sulfite from sulfate: step 1/3.</text>
</comment>
<comment type="subunit">
    <text evidence="1">Heterodimer composed of CysD, the smaller subunit, and CysN.</text>
</comment>
<comment type="similarity">
    <text evidence="1">Belongs to the PAPS reductase family. CysD subfamily.</text>
</comment>
<organism>
    <name type="scientific">Vibrio vulnificus (strain YJ016)</name>
    <dbReference type="NCBI Taxonomy" id="196600"/>
    <lineage>
        <taxon>Bacteria</taxon>
        <taxon>Pseudomonadati</taxon>
        <taxon>Pseudomonadota</taxon>
        <taxon>Gammaproteobacteria</taxon>
        <taxon>Vibrionales</taxon>
        <taxon>Vibrionaceae</taxon>
        <taxon>Vibrio</taxon>
    </lineage>
</organism>
<proteinExistence type="inferred from homology"/>
<sequence length="302" mass="34972">MDQQRLTHLKQLEAESIHIIREVAAEFDNPVMMYSIGKDSSVMLHLARKAFYPGKIPFPLLHVDTDWKFREMIEFRDRTAEKYGFELLVHKNPEGLAMGCSPFTHGSSKHTDIMKTQGLKQALNKYGFDAAFGGARRDEEKSRAKERVYSFRDKNHTWDPKNQRPELWKTYNGQVNKGESIRVFPLSNWTELDIWQYIYLENIEIVPLYLAAKRPVVERDGMLIMVDDDRMKLKEGEVIEEKSVRFRTLGCYPLTGAIESEANTLTGIIEEMLVATSSERQGRAIDHDQSGSMELKKRQGYF</sequence>
<name>CYSD_VIBVY</name>
<protein>
    <recommendedName>
        <fullName evidence="1">Sulfate adenylyltransferase subunit 2</fullName>
        <ecNumber evidence="1">2.7.7.4</ecNumber>
    </recommendedName>
    <alternativeName>
        <fullName evidence="1">ATP-sulfurylase small subunit</fullName>
    </alternativeName>
    <alternativeName>
        <fullName evidence="1">Sulfate adenylate transferase</fullName>
        <shortName evidence="1">SAT</shortName>
    </alternativeName>
</protein>
<accession>Q7MPF3</accession>
<dbReference type="EC" id="2.7.7.4" evidence="1"/>
<dbReference type="EMBL" id="BA000037">
    <property type="protein sequence ID" value="BAC93175.1"/>
    <property type="molecule type" value="Genomic_DNA"/>
</dbReference>
<dbReference type="RefSeq" id="WP_011078801.1">
    <property type="nucleotide sequence ID" value="NC_005139.1"/>
</dbReference>
<dbReference type="SMR" id="Q7MPF3"/>
<dbReference type="STRING" id="672.VV93_v1c03810"/>
<dbReference type="GeneID" id="93895031"/>
<dbReference type="KEGG" id="vvy:VV0411"/>
<dbReference type="eggNOG" id="COG0175">
    <property type="taxonomic scope" value="Bacteria"/>
</dbReference>
<dbReference type="HOGENOM" id="CLU_043026_0_0_6"/>
<dbReference type="UniPathway" id="UPA00140">
    <property type="reaction ID" value="UER00204"/>
</dbReference>
<dbReference type="Proteomes" id="UP000002675">
    <property type="component" value="Chromosome I"/>
</dbReference>
<dbReference type="GO" id="GO:0005524">
    <property type="term" value="F:ATP binding"/>
    <property type="evidence" value="ECO:0007669"/>
    <property type="project" value="UniProtKB-KW"/>
</dbReference>
<dbReference type="GO" id="GO:0004781">
    <property type="term" value="F:sulfate adenylyltransferase (ATP) activity"/>
    <property type="evidence" value="ECO:0007669"/>
    <property type="project" value="UniProtKB-UniRule"/>
</dbReference>
<dbReference type="GO" id="GO:0070814">
    <property type="term" value="P:hydrogen sulfide biosynthetic process"/>
    <property type="evidence" value="ECO:0007669"/>
    <property type="project" value="UniProtKB-UniRule"/>
</dbReference>
<dbReference type="GO" id="GO:0000103">
    <property type="term" value="P:sulfate assimilation"/>
    <property type="evidence" value="ECO:0007669"/>
    <property type="project" value="UniProtKB-UniRule"/>
</dbReference>
<dbReference type="CDD" id="cd23946">
    <property type="entry name" value="Sulfate_adenylyltransferase_2"/>
    <property type="match status" value="1"/>
</dbReference>
<dbReference type="FunFam" id="3.40.50.620:FF:000002">
    <property type="entry name" value="Sulfate adenylyltransferase subunit 2"/>
    <property type="match status" value="1"/>
</dbReference>
<dbReference type="Gene3D" id="3.40.50.620">
    <property type="entry name" value="HUPs"/>
    <property type="match status" value="1"/>
</dbReference>
<dbReference type="HAMAP" id="MF_00064">
    <property type="entry name" value="Sulf_adenylyltr_sub2"/>
    <property type="match status" value="1"/>
</dbReference>
<dbReference type="InterPro" id="IPR002500">
    <property type="entry name" value="PAPS_reduct_dom"/>
</dbReference>
<dbReference type="InterPro" id="IPR014729">
    <property type="entry name" value="Rossmann-like_a/b/a_fold"/>
</dbReference>
<dbReference type="InterPro" id="IPR011784">
    <property type="entry name" value="SO4_adenylTrfase_ssu"/>
</dbReference>
<dbReference type="InterPro" id="IPR050128">
    <property type="entry name" value="Sulfate_adenylyltrnsfr_sub2"/>
</dbReference>
<dbReference type="NCBIfam" id="TIGR02039">
    <property type="entry name" value="CysD"/>
    <property type="match status" value="1"/>
</dbReference>
<dbReference type="NCBIfam" id="NF003587">
    <property type="entry name" value="PRK05253.1"/>
    <property type="match status" value="1"/>
</dbReference>
<dbReference type="NCBIfam" id="NF009214">
    <property type="entry name" value="PRK12563.1"/>
    <property type="match status" value="1"/>
</dbReference>
<dbReference type="PANTHER" id="PTHR43196">
    <property type="entry name" value="SULFATE ADENYLYLTRANSFERASE SUBUNIT 2"/>
    <property type="match status" value="1"/>
</dbReference>
<dbReference type="PANTHER" id="PTHR43196:SF1">
    <property type="entry name" value="SULFATE ADENYLYLTRANSFERASE SUBUNIT 2"/>
    <property type="match status" value="1"/>
</dbReference>
<dbReference type="Pfam" id="PF01507">
    <property type="entry name" value="PAPS_reduct"/>
    <property type="match status" value="1"/>
</dbReference>
<dbReference type="PIRSF" id="PIRSF002936">
    <property type="entry name" value="CysDAde_trans"/>
    <property type="match status" value="1"/>
</dbReference>
<dbReference type="SUPFAM" id="SSF52402">
    <property type="entry name" value="Adenine nucleotide alpha hydrolases-like"/>
    <property type="match status" value="1"/>
</dbReference>
<gene>
    <name evidence="1" type="primary">cysD</name>
    <name type="ordered locus">VV0411</name>
</gene>
<keyword id="KW-0067">ATP-binding</keyword>
<keyword id="KW-0547">Nucleotide-binding</keyword>
<keyword id="KW-0548">Nucleotidyltransferase</keyword>
<keyword id="KW-0808">Transferase</keyword>
<evidence type="ECO:0000255" key="1">
    <source>
        <dbReference type="HAMAP-Rule" id="MF_00064"/>
    </source>
</evidence>
<evidence type="ECO:0000256" key="2">
    <source>
        <dbReference type="SAM" id="MobiDB-lite"/>
    </source>
</evidence>